<dbReference type="EMBL" id="J04542">
    <property type="protein sequence ID" value="AAA76840.1"/>
    <property type="molecule type" value="Genomic_DNA"/>
</dbReference>
<dbReference type="EMBL" id="X52223">
    <property type="protein sequence ID" value="CAA36465.1"/>
    <property type="molecule type" value="Genomic_DNA"/>
</dbReference>
<dbReference type="PIR" id="S12152">
    <property type="entry name" value="S12152"/>
</dbReference>
<dbReference type="SMR" id="P17756"/>
<dbReference type="PRO" id="PR:P17756"/>
<dbReference type="Proteomes" id="UP000007422">
    <property type="component" value="Segment"/>
</dbReference>
<dbReference type="GO" id="GO:0042025">
    <property type="term" value="C:host cell nucleus"/>
    <property type="evidence" value="ECO:0007669"/>
    <property type="project" value="UniProtKB-SubCell"/>
</dbReference>
<dbReference type="GO" id="GO:0020002">
    <property type="term" value="C:host cell plasma membrane"/>
    <property type="evidence" value="ECO:0007669"/>
    <property type="project" value="UniProtKB-SubCell"/>
</dbReference>
<dbReference type="GO" id="GO:0072494">
    <property type="term" value="C:host multivesicular body"/>
    <property type="evidence" value="ECO:0007669"/>
    <property type="project" value="UniProtKB-SubCell"/>
</dbReference>
<dbReference type="GO" id="GO:0016020">
    <property type="term" value="C:membrane"/>
    <property type="evidence" value="ECO:0007669"/>
    <property type="project" value="UniProtKB-KW"/>
</dbReference>
<dbReference type="GO" id="GO:0019013">
    <property type="term" value="C:viral nucleocapsid"/>
    <property type="evidence" value="ECO:0007669"/>
    <property type="project" value="UniProtKB-KW"/>
</dbReference>
<dbReference type="GO" id="GO:0055036">
    <property type="term" value="C:virion membrane"/>
    <property type="evidence" value="ECO:0007669"/>
    <property type="project" value="UniProtKB-SubCell"/>
</dbReference>
<dbReference type="GO" id="GO:0003723">
    <property type="term" value="F:RNA binding"/>
    <property type="evidence" value="ECO:0007669"/>
    <property type="project" value="UniProtKB-KW"/>
</dbReference>
<dbReference type="GO" id="GO:0005198">
    <property type="term" value="F:structural molecule activity"/>
    <property type="evidence" value="ECO:0007669"/>
    <property type="project" value="InterPro"/>
</dbReference>
<dbReference type="GO" id="GO:0008270">
    <property type="term" value="F:zinc ion binding"/>
    <property type="evidence" value="ECO:0007669"/>
    <property type="project" value="UniProtKB-KW"/>
</dbReference>
<dbReference type="GO" id="GO:0039702">
    <property type="term" value="P:viral budding via host ESCRT complex"/>
    <property type="evidence" value="ECO:0007669"/>
    <property type="project" value="UniProtKB-KW"/>
</dbReference>
<dbReference type="GO" id="GO:0075523">
    <property type="term" value="P:viral translational frameshifting"/>
    <property type="evidence" value="ECO:0007669"/>
    <property type="project" value="UniProtKB-KW"/>
</dbReference>
<dbReference type="Gene3D" id="1.10.1200.30">
    <property type="match status" value="1"/>
</dbReference>
<dbReference type="Gene3D" id="1.10.375.10">
    <property type="entry name" value="Human Immunodeficiency Virus Type 1 Capsid Protein"/>
    <property type="match status" value="1"/>
</dbReference>
<dbReference type="Gene3D" id="1.10.150.90">
    <property type="entry name" value="Immunodeficiency lentiviruses, gag gene matrix protein p17"/>
    <property type="match status" value="1"/>
</dbReference>
<dbReference type="Gene3D" id="1.20.5.760">
    <property type="entry name" value="Single helix bin"/>
    <property type="match status" value="1"/>
</dbReference>
<dbReference type="Gene3D" id="4.10.60.10">
    <property type="entry name" value="Zinc finger, CCHC-type"/>
    <property type="match status" value="1"/>
</dbReference>
<dbReference type="InterPro" id="IPR045345">
    <property type="entry name" value="Gag_p24_C"/>
</dbReference>
<dbReference type="InterPro" id="IPR000071">
    <property type="entry name" value="Lentvrl_matrix_N"/>
</dbReference>
<dbReference type="InterPro" id="IPR012344">
    <property type="entry name" value="Matrix_HIV/RSV_N"/>
</dbReference>
<dbReference type="InterPro" id="IPR050195">
    <property type="entry name" value="Primate_lentivir_Gag_pol-like"/>
</dbReference>
<dbReference type="InterPro" id="IPR008916">
    <property type="entry name" value="Retrov_capsid_C"/>
</dbReference>
<dbReference type="InterPro" id="IPR008919">
    <property type="entry name" value="Retrov_capsid_N"/>
</dbReference>
<dbReference type="InterPro" id="IPR010999">
    <property type="entry name" value="Retrovr_matrix"/>
</dbReference>
<dbReference type="InterPro" id="IPR001878">
    <property type="entry name" value="Znf_CCHC"/>
</dbReference>
<dbReference type="InterPro" id="IPR036875">
    <property type="entry name" value="Znf_CCHC_sf"/>
</dbReference>
<dbReference type="PANTHER" id="PTHR40389">
    <property type="entry name" value="ENDOGENOUS RETROVIRUS GROUP K MEMBER 24 GAG POLYPROTEIN-RELATED"/>
    <property type="match status" value="1"/>
</dbReference>
<dbReference type="PANTHER" id="PTHR40389:SF2">
    <property type="entry name" value="ENDOGENOUS RETROVIRUS GROUP K MEMBER 24 GAG POLYPROTEIN-RELATED"/>
    <property type="match status" value="1"/>
</dbReference>
<dbReference type="Pfam" id="PF00540">
    <property type="entry name" value="Gag_p17"/>
    <property type="match status" value="1"/>
</dbReference>
<dbReference type="Pfam" id="PF00607">
    <property type="entry name" value="Gag_p24"/>
    <property type="match status" value="1"/>
</dbReference>
<dbReference type="Pfam" id="PF19317">
    <property type="entry name" value="Gag_p24_C"/>
    <property type="match status" value="1"/>
</dbReference>
<dbReference type="Pfam" id="PF00098">
    <property type="entry name" value="zf-CCHC"/>
    <property type="match status" value="2"/>
</dbReference>
<dbReference type="PRINTS" id="PR00234">
    <property type="entry name" value="HIV1MATRIX"/>
</dbReference>
<dbReference type="SMART" id="SM00343">
    <property type="entry name" value="ZnF_C2HC"/>
    <property type="match status" value="2"/>
</dbReference>
<dbReference type="SUPFAM" id="SSF47836">
    <property type="entry name" value="Retroviral matrix proteins"/>
    <property type="match status" value="1"/>
</dbReference>
<dbReference type="SUPFAM" id="SSF47353">
    <property type="entry name" value="Retrovirus capsid dimerization domain-like"/>
    <property type="match status" value="1"/>
</dbReference>
<dbReference type="SUPFAM" id="SSF47943">
    <property type="entry name" value="Retrovirus capsid protein, N-terminal core domain"/>
    <property type="match status" value="1"/>
</dbReference>
<dbReference type="SUPFAM" id="SSF57756">
    <property type="entry name" value="Retrovirus zinc finger-like domains"/>
    <property type="match status" value="1"/>
</dbReference>
<dbReference type="PROSITE" id="PS50158">
    <property type="entry name" value="ZF_CCHC"/>
    <property type="match status" value="2"/>
</dbReference>
<comment type="function">
    <molecule>Gag polyprotein</molecule>
    <text evidence="5">Mediates, with Gag-Pol polyprotein, the essential events in virion assembly, including binding the plasma membrane, making the protein-protein interactions necessary to create spherical particles, recruiting the viral Env proteins, and packaging the genomic RNA via direct interactions with the RNA packaging sequence (Psi).</text>
</comment>
<comment type="function">
    <molecule>Matrix protein p17</molecule>
    <text evidence="1 6">Targets the polyprotein to the plasma membrane via a multipartite membrane-binding signal, that includes its myristoylated N-terminus (By similarity). Matrix protein is part of the pre-integration complex. Implicated in the release from host cell mediated by Vpu. Binds to RNA (By similarity).</text>
</comment>
<comment type="function">
    <molecule>Capsid protein p24</molecule>
    <text evidence="5 6 8">Forms the conical core that encapsulates the genomic RNA-nucleocapsid complex in the virion (By similarity). Most core are conical, with only 7% tubular (By similarity). The core is constituted by capsid protein hexamer subunits (By similarity). The core is disassembled soon after virion entry (By similarity). Host restriction factors such as TRIM5-alpha or TRIMCyp bind retroviral capsids and cause premature capsid disassembly, leading to blocks in reverse transcription (By similarity). Capsid restriction by TRIM5 is one of the factors which restricts HIV-1 to the human species (By similarity). Host PIN1 apparently facilitates the virion uncoating (By similarity). On the other hand, interactions with PDZD8 or CYPA stabilize the capsid (By similarity). The capsid interacts with high affinity with human NONO, promoting detection of viral DNA by CGAS, leading to CGAS-mediated inmmune activation (By similarity).</text>
</comment>
<comment type="function">
    <molecule>Nucleocapsid protein p7</molecule>
    <text evidence="5">Encapsulates and protects viral dimeric unspliced genomic RNA (gRNA). Binds these RNAs through its zinc fingers. Acts as a nucleic acid chaperone which is involved in rearangement of nucleic acid secondary structure during gRNA retrotranscription. Also facilitates template switch leading to recombination. As part of the polyprotein, participates in gRNA dimerization, packaging, tRNA incorporation and virion assembly.</text>
</comment>
<comment type="function">
    <molecule>p6-gag</molecule>
    <text evidence="6">Plays a role in budding of the assembled particle by interacting with the host class E VPS proteins TSG101 and PDCD6IP/AIP1.</text>
</comment>
<comment type="subunit">
    <molecule>Gag polyprotein</molecule>
    <text evidence="4 5">Homotrimer; further assembles as hexamers of trimers. Oligomerization possibly creates a central hole into which the cytoplasmic tail of the gp41 envelope protein may be inserted. Interacts with host TRIM22; this interaction seems to disrupt proper trafficking of Gag polyprotein and may interfere with budding. Interacts with host PDZD8. When ubiquitinated, interacts (via p6-gag domain) with host PACSIN2; this interaction allows PACSIN2 recruitment to viral assembly sites and its subsequent incorporation into virions (By similarity).</text>
</comment>
<comment type="subunit">
    <molecule>Matrix protein p17</molecule>
    <text evidence="5 6">Homotrimer; further assembles as hexamers of trimers. Interacts with gp41 (via C-terminus). Interacts with host CALM1; this interaction induces a conformational change in the Matrix protein, triggering exposure of the myristate group. Interacts with host AP3D1; this interaction allows the polyprotein trafficking to multivesicular bodies during virus assembly. Part of the pre-integration complex (PIC) which is composed of viral genome, matrix protein, Vpr and integrase.</text>
</comment>
<comment type="subunit">
    <molecule>Capsid protein p24</molecule>
    <text evidence="5 6 8">Homodimer; the homodimer further multimerizes as homohexamers or homopentamers (By similarity). Interacts with host NUP98 (By similarity). Interacts with host PPIA/CYPA; this interaction stabilizes the capsid (By similarity). Interacts with host NUP153 (By similarity). Interacts with host PDZD8; this interaction stabilizes the capsid. Interacts with host TRIM5; this interaction destabilizes the capsid (By similarity). Interacts with host CPSF6 (By similarity). Interacts with host NONO; the interaction is the interaction is strong and promotes CGAS-mediated immunity (By similarity).</text>
</comment>
<comment type="subunit">
    <molecule>Nucleocapsid protein p7</molecule>
    <text evidence="6">Interacts with host NUP98.</text>
</comment>
<comment type="subunit">
    <molecule>p6-gag</molecule>
    <text evidence="3 6">Interacts with Vpr; this interaction allows Vpr incorporation into the virion. Interacts with host TSG101. p6-gag interacts with host PDCD6IP/AIP1.</text>
</comment>
<comment type="subcellular location">
    <molecule>Gag polyprotein</molecule>
    <subcellularLocation>
        <location evidence="6">Host cell membrane</location>
        <topology evidence="6">Lipid-anchor</topology>
    </subcellularLocation>
    <subcellularLocation>
        <location evidence="6">Host endosome</location>
        <location evidence="6">Host multivesicular body</location>
    </subcellularLocation>
    <text evidence="6">These locations are probably linked to virus assembly sites. The main location is the cell membrane, but under some circumstances, late endosomal compartments can serve as productive sites for virion assembly.</text>
</comment>
<comment type="subcellular location">
    <molecule>Matrix protein p17</molecule>
    <subcellularLocation>
        <location evidence="6">Virion membrane</location>
        <topology evidence="6">Lipid-anchor</topology>
    </subcellularLocation>
    <subcellularLocation>
        <location evidence="1">Host nucleus</location>
    </subcellularLocation>
    <subcellularLocation>
        <location evidence="1">Host cytoplasm</location>
    </subcellularLocation>
</comment>
<comment type="subcellular location">
    <molecule>Capsid protein p24</molecule>
    <subcellularLocation>
        <location evidence="6">Virion</location>
    </subcellularLocation>
</comment>
<comment type="subcellular location">
    <molecule>Nucleocapsid protein p7</molecule>
    <subcellularLocation>
        <location evidence="6">Virion</location>
    </subcellularLocation>
</comment>
<comment type="alternative products">
    <event type="ribosomal frameshifting"/>
    <isoform>
        <id>P17756-1</id>
        <name>Gag polyprotein</name>
        <sequence type="displayed"/>
    </isoform>
    <isoform>
        <id>P17757-1</id>
        <name>Gag-Pol polyprotein</name>
        <sequence type="external"/>
    </isoform>
    <text>Translation results in the formation of the Gag polyprotein most of the time. Ribosomal frameshifting at the gag-pol genes boundary occurs at low frequency and produces the Gag-Pol polyprotein. This strategy of translation probably allows the virus to modulate the quantity of each viral protein. Maintenance of a correct Gag to Gag-Pol ratio is essential for RNA dimerization and viral infectivity.</text>
</comment>
<comment type="domain">
    <text evidence="1">Late-budding domains (L domains) are short sequence motifs essential for viral particle budding. They recruit proteins of the host ESCRT machinery (Endosomal Sorting Complex Required for Transport) or ESCRT-associated proteins. p6-gag contains one L domains: a PTAP/PSAP motif, which interacts with the UEV domain of TSG101 (By similarity).</text>
</comment>
<comment type="PTM">
    <text evidence="6">Gag-Pol polyprotein: Specific enzymatic cleavages by the viral protease yield mature proteins.</text>
</comment>
<comment type="PTM">
    <molecule>Matrix protein p17</molecule>
    <text evidence="5">Tyrosine phosphorylated presumably in the virion by a host kinase. Phosphorylation is apparently not a major regulator of membrane association.</text>
</comment>
<comment type="PTM">
    <text evidence="6">Capsid protein p24 is phosphorylated possibly by host MAPK1; this phosphorylation is necessary for Pin1-mediated virion uncoating.</text>
</comment>
<comment type="PTM">
    <text evidence="2">Nucleocapsid protein p7 is methylated by host PRMT6, impairing its function by reducing RNA annealing and the initiation of reverse transcription.</text>
</comment>
<comment type="miscellaneous">
    <text>This isolate is from a Gambian case of 'neuro-AIDS'.</text>
</comment>
<comment type="miscellaneous">
    <molecule>Isoform Gag polyprotein</molecule>
    <text>Produced by conventional translation.</text>
</comment>
<comment type="similarity">
    <text evidence="10">Belongs to the primate lentivirus group gag polyprotein family.</text>
</comment>
<gene>
    <name type="primary">gag</name>
</gene>
<accession>P17756</accession>
<protein>
    <recommendedName>
        <fullName>Gag polyprotein</fullName>
    </recommendedName>
    <alternativeName>
        <fullName>Pr55Gag</fullName>
    </alternativeName>
    <component>
        <recommendedName>
            <fullName>Matrix protein p17</fullName>
            <shortName>MA</shortName>
        </recommendedName>
    </component>
    <component>
        <recommendedName>
            <fullName>Capsid protein p24</fullName>
            <shortName>CA</shortName>
        </recommendedName>
    </component>
    <component>
        <recommendedName>
            <fullName evidence="6">Spacer peptide 1</fullName>
            <shortName>SP1</shortName>
        </recommendedName>
        <alternativeName>
            <fullName>p2</fullName>
        </alternativeName>
    </component>
    <component>
        <recommendedName>
            <fullName>Nucleocapsid protein p7</fullName>
            <shortName>NC</shortName>
        </recommendedName>
    </component>
    <component>
        <recommendedName>
            <fullName evidence="6">Spacer peptide 2</fullName>
            <shortName>SP2</shortName>
        </recommendedName>
        <alternativeName>
            <fullName>p1</fullName>
        </alternativeName>
    </component>
    <component>
        <recommendedName>
            <fullName>p6-gag</fullName>
        </recommendedName>
    </component>
</protein>
<keyword id="KW-0014">AIDS</keyword>
<keyword id="KW-0167">Capsid protein</keyword>
<keyword id="KW-1032">Host cell membrane</keyword>
<keyword id="KW-1035">Host cytoplasm</keyword>
<keyword id="KW-1039">Host endosome</keyword>
<keyword id="KW-1043">Host membrane</keyword>
<keyword id="KW-1048">Host nucleus</keyword>
<keyword id="KW-0945">Host-virus interaction</keyword>
<keyword id="KW-0449">Lipoprotein</keyword>
<keyword id="KW-0472">Membrane</keyword>
<keyword id="KW-0479">Metal-binding</keyword>
<keyword id="KW-0519">Myristate</keyword>
<keyword id="KW-0597">Phosphoprotein</keyword>
<keyword id="KW-0677">Repeat</keyword>
<keyword id="KW-0688">Ribosomal frameshifting</keyword>
<keyword id="KW-0694">RNA-binding</keyword>
<keyword id="KW-1198">Viral budding</keyword>
<keyword id="KW-1187">Viral budding via the host ESCRT complexes</keyword>
<keyword id="KW-0543">Viral nucleoprotein</keyword>
<keyword id="KW-1188">Viral release from host cell</keyword>
<keyword id="KW-0946">Virion</keyword>
<keyword id="KW-0862">Zinc</keyword>
<keyword id="KW-0863">Zinc-finger</keyword>
<evidence type="ECO:0000250" key="1"/>
<evidence type="ECO:0000250" key="2">
    <source>
        <dbReference type="UniProtKB" id="P03347"/>
    </source>
</evidence>
<evidence type="ECO:0000250" key="3">
    <source>
        <dbReference type="UniProtKB" id="P03348"/>
    </source>
</evidence>
<evidence type="ECO:0000250" key="4">
    <source>
        <dbReference type="UniProtKB" id="P03349"/>
    </source>
</evidence>
<evidence type="ECO:0000250" key="5">
    <source>
        <dbReference type="UniProtKB" id="P04591"/>
    </source>
</evidence>
<evidence type="ECO:0000250" key="6">
    <source>
        <dbReference type="UniProtKB" id="P12493"/>
    </source>
</evidence>
<evidence type="ECO:0000250" key="7">
    <source>
        <dbReference type="UniProtKB" id="P12497"/>
    </source>
</evidence>
<evidence type="ECO:0000250" key="8">
    <source>
        <dbReference type="UniProtKB" id="P18095"/>
    </source>
</evidence>
<evidence type="ECO:0000255" key="9">
    <source>
        <dbReference type="PROSITE-ProRule" id="PRU00047"/>
    </source>
</evidence>
<evidence type="ECO:0000305" key="10"/>
<proteinExistence type="inferred from homology"/>
<name>GAG_HV2D1</name>
<organism>
    <name type="scientific">Human immunodeficiency virus type 2 subtype A (isolate D194)</name>
    <name type="common">HIV-2</name>
    <dbReference type="NCBI Taxonomy" id="11713"/>
    <lineage>
        <taxon>Viruses</taxon>
        <taxon>Riboviria</taxon>
        <taxon>Pararnavirae</taxon>
        <taxon>Artverviricota</taxon>
        <taxon>Revtraviricetes</taxon>
        <taxon>Ortervirales</taxon>
        <taxon>Retroviridae</taxon>
        <taxon>Orthoretrovirinae</taxon>
        <taxon>Lentivirus</taxon>
        <taxon>Human immunodeficiency virus 2</taxon>
    </lineage>
</organism>
<organismHost>
    <name type="scientific">Homo sapiens</name>
    <name type="common">Human</name>
    <dbReference type="NCBI Taxonomy" id="9606"/>
</organismHost>
<feature type="initiator methionine" description="Removed; by host" evidence="1">
    <location>
        <position position="1"/>
    </location>
</feature>
<feature type="chain" id="PRO_0000261242" description="Gag polyprotein">
    <location>
        <begin position="2"/>
        <end position="521"/>
    </location>
</feature>
<feature type="chain" id="PRO_0000038599" description="Matrix protein p17" evidence="1">
    <location>
        <begin position="2"/>
        <end position="135"/>
    </location>
</feature>
<feature type="chain" id="PRO_0000038600" description="Capsid protein p24" evidence="1">
    <location>
        <begin position="136"/>
        <end position="365"/>
    </location>
</feature>
<feature type="peptide" id="PRO_0000042059" description="Spacer peptide 1" evidence="1">
    <location>
        <begin position="366"/>
        <end position="382"/>
    </location>
</feature>
<feature type="chain" id="PRO_0000042060" description="Nucleocapsid protein p7" evidence="1">
    <location>
        <begin position="383"/>
        <end position="431"/>
    </location>
</feature>
<feature type="peptide" id="PRO_0000042061" description="Spacer peptide 2" evidence="1">
    <location>
        <begin position="432"/>
        <end position="445"/>
    </location>
</feature>
<feature type="chain" id="PRO_0000042062" description="p6-gag" evidence="1">
    <location>
        <begin position="446"/>
        <end position="521"/>
    </location>
</feature>
<feature type="zinc finger region" description="CCHC-type 1" evidence="9">
    <location>
        <begin position="389"/>
        <end position="406"/>
    </location>
</feature>
<feature type="zinc finger region" description="CCHC-type 2" evidence="9">
    <location>
        <begin position="410"/>
        <end position="427"/>
    </location>
</feature>
<feature type="region of interest" description="Interaction with Gp41" evidence="6">
    <location>
        <begin position="7"/>
        <end position="31"/>
    </location>
</feature>
<feature type="region of interest" description="Interaction with host CALM1" evidence="5">
    <location>
        <begin position="8"/>
        <end position="43"/>
    </location>
</feature>
<feature type="region of interest" description="Interaction with host AP3D1" evidence="7">
    <location>
        <begin position="12"/>
        <end position="19"/>
    </location>
</feature>
<feature type="region of interest" description="Interaction with membrane phosphatidylinositol 4,5-bisphosphate and RNA" evidence="6">
    <location>
        <begin position="14"/>
        <end position="33"/>
    </location>
</feature>
<feature type="region of interest" description="Interaction with membrane phosphatidylinositol 4,5-bisphosphate" evidence="6">
    <location>
        <begin position="73"/>
        <end position="77"/>
    </location>
</feature>
<feature type="region of interest" description="Interaction with host PPIA/CYPA and NUP153" evidence="6">
    <location>
        <begin position="191"/>
        <end position="228"/>
    </location>
</feature>
<feature type="region of interest" description="PPIA/CYPA-binding loop" evidence="5">
    <location>
        <begin position="219"/>
        <end position="226"/>
    </location>
</feature>
<feature type="region of interest" description="Dimerization/Multimerization of capsid protein p24" evidence="5">
    <location>
        <begin position="279"/>
        <end position="365"/>
    </location>
</feature>
<feature type="short sequence motif" description="Nuclear export signal" evidence="1">
    <location>
        <begin position="16"/>
        <end position="22"/>
    </location>
</feature>
<feature type="short sequence motif" description="Nuclear localization signal" evidence="1">
    <location>
        <begin position="26"/>
        <end position="32"/>
    </location>
</feature>
<feature type="short sequence motif" description="PTAP/PSAP motif">
    <location>
        <begin position="456"/>
        <end position="459"/>
    </location>
</feature>
<feature type="site" description="Cleavage; by viral protease" evidence="1">
    <location>
        <begin position="135"/>
        <end position="136"/>
    </location>
</feature>
<feature type="site" description="Cleavage; by viral protease" evidence="1">
    <location>
        <begin position="365"/>
        <end position="366"/>
    </location>
</feature>
<feature type="site" description="Cleavage; by viral protease" evidence="1">
    <location>
        <begin position="382"/>
        <end position="383"/>
    </location>
</feature>
<feature type="site" description="Cleavage; by viral protease" evidence="1">
    <location>
        <begin position="431"/>
        <end position="432"/>
    </location>
</feature>
<feature type="site" description="Cleavage; by viral protease" evidence="1">
    <location>
        <begin position="445"/>
        <end position="446"/>
    </location>
</feature>
<feature type="modified residue" description="Phosphoserine; by host MAPK1" evidence="6">
    <location>
        <position position="150"/>
    </location>
</feature>
<feature type="lipid moiety-binding region" description="N-myristoyl glycine; by host" evidence="1">
    <location>
        <position position="2"/>
    </location>
</feature>
<reference key="1">
    <citation type="journal article" date="1990" name="Nucleic Acids Res.">
        <title>Nucleotide sequence of HIV-2D194, an isolate from a Gambian case of 'neuro-AIDS', which showed excellent growth in macrophages.</title>
        <authorList>
            <person name="Kuehnel H."/>
            <person name="Kreutz R."/>
            <person name="Ruebsamen-Waigmann H."/>
        </authorList>
    </citation>
    <scope>NUCLEOTIDE SEQUENCE [GENOMIC DNA]</scope>
</reference>
<reference key="2">
    <citation type="journal article" date="1989" name="Proc. Natl. Acad. Sci. U.S.A.">
        <title>Molecular cloning of two west African human immunodeficiency virus type 2 isolates that replicate well in macrophages: a Gambian isolate, from a patient with neurologic acquired immunodeficiency syndrome, and a highly divergent Ghanian isolate.</title>
        <authorList>
            <person name="Kuehnel H."/>
            <person name="von Briesen H."/>
            <person name="Dietrich U."/>
            <person name="Adamski M."/>
            <person name="Mix D."/>
            <person name="Biesert L."/>
            <person name="Kreutz R."/>
            <person name="Immelmann A."/>
            <person name="Henco K."/>
            <person name="Meichsner C."/>
            <person name="Andreesen R."/>
            <person name="Gelderblom H."/>
            <person name="Ruebsamen-Waigmann H."/>
        </authorList>
    </citation>
    <scope>NUCLEOTIDE SEQUENCE [GENOMIC DNA] OF 130-521</scope>
</reference>
<sequence>MGARNSVLRGKKADELEKVRLRPNGKKRYRLKHVVWAANELDRFGLAESLLESKEGCQKILKVLEPLVPTGSENLKSLFNTVCVIWCLHAEEKVKDTEEAKKLAQRHLVAETGTAEKMPNISRPTAPPSGKGGNFPVQQAGGNYIHVPLSPRTLNAWVKLVEEKKFGAEVVPGFQALSEGCTPYDINQMLNCVGDHQAAMQIIREIINEEAADWDAQHPIPGPLPAGQLRDPRGSDIAGTTSTVDEQIQWMYRQPNPVPVGNIYRRWIQIGLQKCVRMYNPTNILDVKQGPKESFQSYVDRFYKSLRAEQTDPAVKNWMTQTLLIQNANPDCKLVLKGLGMNPTLEEMLTACQGVGGPSQKARLMAEALKEALTPAPIPFAAAQQRRAIRCWNCGKEGHSAKQCRAPRRQGCWKCGKSGHIMANCPERQAGFLGMGPRGKQPRNFPAAQAPQGLIPTAPPIDPAVDLLEKYMQQGRKQREQRERPYKEVTEDLLHLEQGETPHRGATEDLLHLNSLFGKDQ</sequence>